<reference key="1">
    <citation type="journal article" date="2004" name="Genome Res.">
        <title>The status, quality, and expansion of the NIH full-length cDNA project: the Mammalian Gene Collection (MGC).</title>
        <authorList>
            <consortium name="The MGC Project Team"/>
        </authorList>
    </citation>
    <scope>NUCLEOTIDE SEQUENCE [LARGE SCALE MRNA]</scope>
    <source>
        <tissue>Testis</tissue>
    </source>
</reference>
<accession>Q4V7F0</accession>
<sequence>MQESQETHMSSHLDEVIAAVSVTSKNRLSNKLLQTALFQPPREKLHLCEERAKSYSSIREYKQAIQELVRCVALTKICYGDSHWKLAEAYVNLAQGYLQLKGLSLQAKQHAEKAKEILANSMESPYYNKTDIFKCSLELFYTLGKALVSLQKFKEAWENLIKAERLSKEMLQCGNIIKEEWIEIQSRIKLSFAQLYQGQKRSKEAFPYYQKALEYTETTKDEKSFECAQVLREMAGVEQALALHDASIGHFSQAHLIILSKEPSPEDAADSALSIARAAVASGMHDHHDVAEKYFQESMTYLKDSEGTEKAKFLSIQDEFCSFLQTIGQKERAAMILRESLEAKIGVFGDFSPEVAETYRILGRADLAQGNNNGAHMKLKKCVQIETFLYGSQDKKTMATQQTIDTLSKISETPVKSKQSLKAKTAFCTSVPQYVTPGKARHSAAE</sequence>
<protein>
    <recommendedName>
        <fullName>Tetratricopeptide repeat protein 23</fullName>
        <shortName>TPR repeat protein 23</shortName>
    </recommendedName>
</protein>
<organism>
    <name type="scientific">Rattus norvegicus</name>
    <name type="common">Rat</name>
    <dbReference type="NCBI Taxonomy" id="10116"/>
    <lineage>
        <taxon>Eukaryota</taxon>
        <taxon>Metazoa</taxon>
        <taxon>Chordata</taxon>
        <taxon>Craniata</taxon>
        <taxon>Vertebrata</taxon>
        <taxon>Euteleostomi</taxon>
        <taxon>Mammalia</taxon>
        <taxon>Eutheria</taxon>
        <taxon>Euarchontoglires</taxon>
        <taxon>Glires</taxon>
        <taxon>Rodentia</taxon>
        <taxon>Myomorpha</taxon>
        <taxon>Muroidea</taxon>
        <taxon>Muridae</taxon>
        <taxon>Murinae</taxon>
        <taxon>Rattus</taxon>
    </lineage>
</organism>
<gene>
    <name type="primary">Ttc23</name>
</gene>
<proteinExistence type="evidence at transcript level"/>
<feature type="chain" id="PRO_0000289550" description="Tetratricopeptide repeat protein 23">
    <location>
        <begin position="1"/>
        <end position="446"/>
    </location>
</feature>
<feature type="repeat" description="TPR 1">
    <location>
        <begin position="45"/>
        <end position="78"/>
    </location>
</feature>
<feature type="repeat" description="TPR 2">
    <location>
        <begin position="137"/>
        <end position="170"/>
    </location>
</feature>
<feature type="repeat" description="TPR 3">
    <location>
        <begin position="186"/>
        <end position="219"/>
    </location>
</feature>
<feature type="repeat" description="TPR 4">
    <location>
        <begin position="356"/>
        <end position="389"/>
    </location>
</feature>
<name>TTC23_RAT</name>
<keyword id="KW-0966">Cell projection</keyword>
<keyword id="KW-1185">Reference proteome</keyword>
<keyword id="KW-0677">Repeat</keyword>
<keyword id="KW-0802">TPR repeat</keyword>
<dbReference type="EMBL" id="BC097953">
    <property type="protein sequence ID" value="AAH97953.1"/>
    <property type="molecule type" value="mRNA"/>
</dbReference>
<dbReference type="RefSeq" id="NP_001020852.2">
    <property type="nucleotide sequence ID" value="NM_001025681.1"/>
</dbReference>
<dbReference type="SMR" id="Q4V7F0"/>
<dbReference type="FunCoup" id="Q4V7F0">
    <property type="interactions" value="467"/>
</dbReference>
<dbReference type="STRING" id="10116.ENSRNOP00000066210"/>
<dbReference type="GlyGen" id="Q4V7F0">
    <property type="glycosylation" value="1 site"/>
</dbReference>
<dbReference type="PhosphoSitePlus" id="Q4V7F0"/>
<dbReference type="PaxDb" id="10116-ENSRNOP00000018639"/>
<dbReference type="GeneID" id="308708"/>
<dbReference type="KEGG" id="rno:308708"/>
<dbReference type="UCSC" id="RGD:1310409">
    <property type="organism name" value="rat"/>
</dbReference>
<dbReference type="AGR" id="RGD:1310409"/>
<dbReference type="CTD" id="64927"/>
<dbReference type="RGD" id="1310409">
    <property type="gene designation" value="Ttc23"/>
</dbReference>
<dbReference type="eggNOG" id="ENOG502RQY0">
    <property type="taxonomic scope" value="Eukaryota"/>
</dbReference>
<dbReference type="InParanoid" id="Q4V7F0"/>
<dbReference type="PhylomeDB" id="Q4V7F0"/>
<dbReference type="PRO" id="PR:Q4V7F0"/>
<dbReference type="Proteomes" id="UP000002494">
    <property type="component" value="Unplaced"/>
</dbReference>
<dbReference type="GO" id="GO:0005929">
    <property type="term" value="C:cilium"/>
    <property type="evidence" value="ECO:0000250"/>
    <property type="project" value="UniProtKB"/>
</dbReference>
<dbReference type="GO" id="GO:0045880">
    <property type="term" value="P:positive regulation of smoothened signaling pathway"/>
    <property type="evidence" value="ECO:0000250"/>
    <property type="project" value="UniProtKB"/>
</dbReference>
<dbReference type="Gene3D" id="1.25.40.10">
    <property type="entry name" value="Tetratricopeptide repeat domain"/>
    <property type="match status" value="3"/>
</dbReference>
<dbReference type="InterPro" id="IPR011990">
    <property type="entry name" value="TPR-like_helical_dom_sf"/>
</dbReference>
<dbReference type="InterPro" id="IPR019734">
    <property type="entry name" value="TPR_rpt"/>
</dbReference>
<dbReference type="InterPro" id="IPR042621">
    <property type="entry name" value="TTC23/TTC23L"/>
</dbReference>
<dbReference type="PANTHER" id="PTHR14485">
    <property type="entry name" value="TETRATRICOPEPTIDE REPEAT PROTEIN 23"/>
    <property type="match status" value="1"/>
</dbReference>
<dbReference type="PANTHER" id="PTHR14485:SF3">
    <property type="entry name" value="TETRATRICOPEPTIDE REPEAT PROTEIN 23"/>
    <property type="match status" value="1"/>
</dbReference>
<dbReference type="Pfam" id="PF13181">
    <property type="entry name" value="TPR_8"/>
    <property type="match status" value="1"/>
</dbReference>
<dbReference type="SMART" id="SM00028">
    <property type="entry name" value="TPR"/>
    <property type="match status" value="3"/>
</dbReference>
<dbReference type="SUPFAM" id="SSF48452">
    <property type="entry name" value="TPR-like"/>
    <property type="match status" value="1"/>
</dbReference>
<evidence type="ECO:0000250" key="1">
    <source>
        <dbReference type="UniProtKB" id="Q8CHY7"/>
    </source>
</evidence>
<comment type="function">
    <text evidence="1">Participates positively in the ciliary Hedgehog (Hh) signaling.</text>
</comment>
<comment type="subunit">
    <text evidence="1">Associated with the EvC complex composed of EFCAB7, IQCE, EVC2 and EVC.</text>
</comment>
<comment type="subcellular location">
    <subcellularLocation>
        <location evidence="1">Cell projection</location>
        <location evidence="1">Cilium</location>
    </subcellularLocation>
    <text evidence="1">Colocalizes with EVC and IQCE at the EvC zone of primary cilia.</text>
</comment>